<protein>
    <recommendedName>
        <fullName evidence="1">Small ribosomal subunit protein uS5</fullName>
    </recommendedName>
    <alternativeName>
        <fullName evidence="2">30S ribosomal protein S5</fullName>
    </alternativeName>
</protein>
<name>RS5_SACI1</name>
<sequence length="214" mass="23683">MAEEVPSINIEEWKPRTSIGNLVKNGKISSIKELFDRNLPITEPEIVDVLLPKLKYEVVDIKVVQKQTDAGEISRYKVLVIMGNMDGYVSIGTGKAKQLRVAIQKAIRDAKMNILPVRRGCGSWQCTCGEPHSLPFKVVGKAGSVEVNLLPAPKGTGLVVGSVLKTLLTYAGIRDAWSTTKGETRTTENFVRAGYSALYNTYNFVTLQDWARKR</sequence>
<evidence type="ECO:0000255" key="1">
    <source>
        <dbReference type="HAMAP-Rule" id="MF_01307"/>
    </source>
</evidence>
<evidence type="ECO:0000305" key="2"/>
<gene>
    <name evidence="1" type="primary">rps5</name>
    <name type="ordered locus">YN1551_1408</name>
</gene>
<organism>
    <name type="scientific">Saccharolobus islandicus (strain Y.N.15.51 / Yellowstone #2)</name>
    <name type="common">Sulfolobus islandicus</name>
    <dbReference type="NCBI Taxonomy" id="419942"/>
    <lineage>
        <taxon>Archaea</taxon>
        <taxon>Thermoproteota</taxon>
        <taxon>Thermoprotei</taxon>
        <taxon>Sulfolobales</taxon>
        <taxon>Sulfolobaceae</taxon>
        <taxon>Saccharolobus</taxon>
    </lineage>
</organism>
<keyword id="KW-0687">Ribonucleoprotein</keyword>
<keyword id="KW-0689">Ribosomal protein</keyword>
<keyword id="KW-0694">RNA-binding</keyword>
<keyword id="KW-0699">rRNA-binding</keyword>
<comment type="function">
    <text evidence="1">With S4 and S12 plays an important role in translational accuracy.</text>
</comment>
<comment type="subunit">
    <text evidence="1">Part of the 30S ribosomal subunit. Contacts protein S4.</text>
</comment>
<comment type="domain">
    <text>The N-terminal domain interacts with the head of the 30S subunit; the C-terminal domain interacts with the body and contacts protein S4. The interaction surface between S4 and S5 is involved in control of translational fidelity.</text>
</comment>
<comment type="similarity">
    <text evidence="1">Belongs to the universal ribosomal protein uS5 family.</text>
</comment>
<reference key="1">
    <citation type="journal article" date="2009" name="Proc. Natl. Acad. Sci. U.S.A.">
        <title>Biogeography of the Sulfolobus islandicus pan-genome.</title>
        <authorList>
            <person name="Reno M.L."/>
            <person name="Held N.L."/>
            <person name="Fields C.J."/>
            <person name="Burke P.V."/>
            <person name="Whitaker R.J."/>
        </authorList>
    </citation>
    <scope>NUCLEOTIDE SEQUENCE [LARGE SCALE GENOMIC DNA]</scope>
    <source>
        <strain>Y.N.15.51 / Yellowstone #2</strain>
    </source>
</reference>
<feature type="chain" id="PRO_1000214326" description="Small ribosomal subunit protein uS5">
    <location>
        <begin position="1"/>
        <end position="214"/>
    </location>
</feature>
<feature type="domain" description="S5 DRBM" evidence="1">
    <location>
        <begin position="54"/>
        <end position="117"/>
    </location>
</feature>
<dbReference type="EMBL" id="CP001404">
    <property type="protein sequence ID" value="ACP48499.1"/>
    <property type="molecule type" value="Genomic_DNA"/>
</dbReference>
<dbReference type="RefSeq" id="WP_012717438.1">
    <property type="nucleotide sequence ID" value="NC_012623.1"/>
</dbReference>
<dbReference type="SMR" id="C3NH89"/>
<dbReference type="GeneID" id="7809800"/>
<dbReference type="KEGG" id="sin:YN1551_1408"/>
<dbReference type="HOGENOM" id="CLU_065898_0_1_2"/>
<dbReference type="Proteomes" id="UP000006818">
    <property type="component" value="Chromosome"/>
</dbReference>
<dbReference type="GO" id="GO:0022627">
    <property type="term" value="C:cytosolic small ribosomal subunit"/>
    <property type="evidence" value="ECO:0007669"/>
    <property type="project" value="TreeGrafter"/>
</dbReference>
<dbReference type="GO" id="GO:0019843">
    <property type="term" value="F:rRNA binding"/>
    <property type="evidence" value="ECO:0007669"/>
    <property type="project" value="UniProtKB-UniRule"/>
</dbReference>
<dbReference type="GO" id="GO:0003735">
    <property type="term" value="F:structural constituent of ribosome"/>
    <property type="evidence" value="ECO:0007669"/>
    <property type="project" value="InterPro"/>
</dbReference>
<dbReference type="GO" id="GO:0006412">
    <property type="term" value="P:translation"/>
    <property type="evidence" value="ECO:0007669"/>
    <property type="project" value="UniProtKB-UniRule"/>
</dbReference>
<dbReference type="FunFam" id="3.30.160.20:FF:000002">
    <property type="entry name" value="40S ribosomal protein S2"/>
    <property type="match status" value="1"/>
</dbReference>
<dbReference type="FunFam" id="3.30.230.10:FF:000004">
    <property type="entry name" value="40S ribosomal protein S2"/>
    <property type="match status" value="1"/>
</dbReference>
<dbReference type="Gene3D" id="3.30.160.20">
    <property type="match status" value="1"/>
</dbReference>
<dbReference type="Gene3D" id="3.30.230.10">
    <property type="match status" value="1"/>
</dbReference>
<dbReference type="HAMAP" id="MF_01307_A">
    <property type="entry name" value="Ribosomal_uS5_A"/>
    <property type="match status" value="1"/>
</dbReference>
<dbReference type="InterPro" id="IPR020568">
    <property type="entry name" value="Ribosomal_Su5_D2-typ_SF"/>
</dbReference>
<dbReference type="InterPro" id="IPR000851">
    <property type="entry name" value="Ribosomal_uS5"/>
</dbReference>
<dbReference type="InterPro" id="IPR047866">
    <property type="entry name" value="Ribosomal_uS5_arc"/>
</dbReference>
<dbReference type="InterPro" id="IPR005324">
    <property type="entry name" value="Ribosomal_uS5_C"/>
</dbReference>
<dbReference type="InterPro" id="IPR005711">
    <property type="entry name" value="Ribosomal_uS5_euk/arc"/>
</dbReference>
<dbReference type="InterPro" id="IPR013810">
    <property type="entry name" value="Ribosomal_uS5_N"/>
</dbReference>
<dbReference type="InterPro" id="IPR018192">
    <property type="entry name" value="Ribosomal_uS5_N_CS"/>
</dbReference>
<dbReference type="InterPro" id="IPR014721">
    <property type="entry name" value="Ribsml_uS5_D2-typ_fold_subgr"/>
</dbReference>
<dbReference type="NCBIfam" id="NF003125">
    <property type="entry name" value="PRK04044.1"/>
    <property type="match status" value="1"/>
</dbReference>
<dbReference type="NCBIfam" id="TIGR01020">
    <property type="entry name" value="uS5_euk_arch"/>
    <property type="match status" value="1"/>
</dbReference>
<dbReference type="PANTHER" id="PTHR13718:SF4">
    <property type="entry name" value="40S RIBOSOMAL PROTEIN S2"/>
    <property type="match status" value="1"/>
</dbReference>
<dbReference type="PANTHER" id="PTHR13718">
    <property type="entry name" value="RIBOSOMAL S SUBUNIT"/>
    <property type="match status" value="1"/>
</dbReference>
<dbReference type="Pfam" id="PF00333">
    <property type="entry name" value="Ribosomal_S5"/>
    <property type="match status" value="1"/>
</dbReference>
<dbReference type="Pfam" id="PF03719">
    <property type="entry name" value="Ribosomal_S5_C"/>
    <property type="match status" value="1"/>
</dbReference>
<dbReference type="SUPFAM" id="SSF54768">
    <property type="entry name" value="dsRNA-binding domain-like"/>
    <property type="match status" value="1"/>
</dbReference>
<dbReference type="SUPFAM" id="SSF54211">
    <property type="entry name" value="Ribosomal protein S5 domain 2-like"/>
    <property type="match status" value="1"/>
</dbReference>
<dbReference type="PROSITE" id="PS00585">
    <property type="entry name" value="RIBOSOMAL_S5"/>
    <property type="match status" value="1"/>
</dbReference>
<dbReference type="PROSITE" id="PS50881">
    <property type="entry name" value="S5_DSRBD"/>
    <property type="match status" value="1"/>
</dbReference>
<proteinExistence type="inferred from homology"/>
<accession>C3NH89</accession>